<reference key="1">
    <citation type="journal article" date="1997" name="Photosyn. Res.">
        <title>Transposon insertion in genes coding for the biosynthesis of structural components of the Anabaena sp. phycobilisome.</title>
        <authorList>
            <person name="Cai Y.A."/>
            <person name="Schwarts S.H."/>
            <person name="Glazer A.N."/>
        </authorList>
    </citation>
    <scope>NUCLEOTIDE SEQUENCE [GENOMIC DNA]</scope>
</reference>
<reference key="2">
    <citation type="journal article" date="2001" name="DNA Res.">
        <title>Complete genomic sequence of the filamentous nitrogen-fixing cyanobacterium Anabaena sp. strain PCC 7120.</title>
        <authorList>
            <person name="Kaneko T."/>
            <person name="Nakamura Y."/>
            <person name="Wolk C.P."/>
            <person name="Kuritz T."/>
            <person name="Sasamoto S."/>
            <person name="Watanabe A."/>
            <person name="Iriguchi M."/>
            <person name="Ishikawa A."/>
            <person name="Kawashima K."/>
            <person name="Kimura T."/>
            <person name="Kishida Y."/>
            <person name="Kohara M."/>
            <person name="Matsumoto M."/>
            <person name="Matsuno A."/>
            <person name="Muraki A."/>
            <person name="Nakazaki N."/>
            <person name="Shimpo S."/>
            <person name="Sugimoto M."/>
            <person name="Takazawa M."/>
            <person name="Yamada M."/>
            <person name="Yasuda M."/>
            <person name="Tabata S."/>
        </authorList>
    </citation>
    <scope>NUCLEOTIDE SEQUENCE [LARGE SCALE GENOMIC DNA]</scope>
    <source>
        <strain>PCC 7120 / SAG 25.82 / UTEX 2576</strain>
    </source>
</reference>
<reference key="3">
    <citation type="journal article" date="1996" name="Eur. J. Biochem.">
        <title>Isolation, characterization and electron microscopy analysis of a hemidiscoidal phycobilisome type from the cyanobacterium Anabaena sp. PCC 7120.</title>
        <authorList>
            <person name="Ducret A."/>
            <person name="Sidler W."/>
            <person name="Wehrli E."/>
            <person name="Frank G."/>
            <person name="Zuber H."/>
        </authorList>
    </citation>
    <scope>PROTEIN SEQUENCE OF 2-75</scope>
</reference>
<reference key="4">
    <citation type="journal article" date="2007" name="Proc. Natl. Acad. Sci. U.S.A.">
        <title>Phycobilin:cystein-84 biliprotein lyase, a near-universal lyase for cysteine-84-binding sites in cyanobacterial phycobiliproteins.</title>
        <authorList>
            <person name="Zhao K.H."/>
            <person name="Su P."/>
            <person name="Tu J.M."/>
            <person name="Wang X."/>
            <person name="Liu H."/>
            <person name="Ploscher M."/>
            <person name="Eichacker L."/>
            <person name="Yang B."/>
            <person name="Zhou M."/>
            <person name="Scheer H."/>
        </authorList>
    </citation>
    <scope>CHROMOPHORE ATTACHMENT AT CYS-82</scope>
    <source>
        <strain>PCC 7120 / SAG 25.82 / UTEX 2576</strain>
    </source>
</reference>
<feature type="initiator methionine" description="Removed" evidence="2">
    <location>
        <position position="1"/>
    </location>
</feature>
<feature type="chain" id="PRO_0000199093" description="Allophycocyanin subunit beta">
    <location>
        <begin position="2"/>
        <end position="162"/>
    </location>
</feature>
<feature type="binding site" description="covalent" evidence="3">
    <location>
        <position position="82"/>
    </location>
    <ligand>
        <name>(2R,3E)-phycocyanobilin</name>
        <dbReference type="ChEBI" id="CHEBI:85275"/>
    </ligand>
</feature>
<feature type="modified residue" description="N4-methylasparagine" evidence="1">
    <location>
        <position position="72"/>
    </location>
</feature>
<feature type="sequence conflict" description="In Ref. 3; AA sequence." evidence="3" ref="3">
    <original>N</original>
    <variation>S</variation>
    <location>
        <position position="72"/>
    </location>
</feature>
<dbReference type="EMBL" id="U96137">
    <property type="protein sequence ID" value="AAC97591.1"/>
    <property type="molecule type" value="Genomic_DNA"/>
</dbReference>
<dbReference type="EMBL" id="BA000019">
    <property type="protein sequence ID" value="BAB77546.1"/>
    <property type="molecule type" value="Genomic_DNA"/>
</dbReference>
<dbReference type="PIR" id="AF1809">
    <property type="entry name" value="AF1809"/>
</dbReference>
<dbReference type="RefSeq" id="WP_010994199.1">
    <property type="nucleotide sequence ID" value="NZ_RSCN01000016.1"/>
</dbReference>
<dbReference type="PDB" id="7EYD">
    <property type="method" value="EM"/>
    <property type="resolution" value="3.90 A"/>
    <property type="chains" value="B8/B9/D8/D9/F8/F9/H9/I8/J9/K8/L9/M8/M9/O9/P8/R8/S9/T8/U9/W8/W9/Y8/Y9/a8/a9/c9/d8/e9/f8/h8=1-162"/>
</dbReference>
<dbReference type="PDBsum" id="7EYD"/>
<dbReference type="EMDB" id="EMD-31381"/>
<dbReference type="SMR" id="P80557"/>
<dbReference type="STRING" id="103690.gene:10492026"/>
<dbReference type="GeneID" id="58725379"/>
<dbReference type="KEGG" id="ana:alr0022"/>
<dbReference type="eggNOG" id="ENOG502Z7X0">
    <property type="taxonomic scope" value="Bacteria"/>
</dbReference>
<dbReference type="OrthoDB" id="512145at2"/>
<dbReference type="Proteomes" id="UP000002483">
    <property type="component" value="Chromosome"/>
</dbReference>
<dbReference type="GO" id="GO:0030089">
    <property type="term" value="C:phycobilisome"/>
    <property type="evidence" value="ECO:0007669"/>
    <property type="project" value="UniProtKB-KW"/>
</dbReference>
<dbReference type="GO" id="GO:0031676">
    <property type="term" value="C:plasma membrane-derived thylakoid membrane"/>
    <property type="evidence" value="ECO:0007669"/>
    <property type="project" value="UniProtKB-SubCell"/>
</dbReference>
<dbReference type="GO" id="GO:0015979">
    <property type="term" value="P:photosynthesis"/>
    <property type="evidence" value="ECO:0007669"/>
    <property type="project" value="UniProtKB-KW"/>
</dbReference>
<dbReference type="CDD" id="cd12126">
    <property type="entry name" value="APC_beta"/>
    <property type="match status" value="1"/>
</dbReference>
<dbReference type="Gene3D" id="1.10.490.20">
    <property type="entry name" value="Phycocyanins"/>
    <property type="match status" value="1"/>
</dbReference>
<dbReference type="InterPro" id="IPR006245">
    <property type="entry name" value="Allophycocyanin_b"/>
</dbReference>
<dbReference type="InterPro" id="IPR009050">
    <property type="entry name" value="Globin-like_sf"/>
</dbReference>
<dbReference type="InterPro" id="IPR012128">
    <property type="entry name" value="Phycobilisome_asu/bsu"/>
</dbReference>
<dbReference type="InterPro" id="IPR038719">
    <property type="entry name" value="Phycobilisome_asu/bsu_sf"/>
</dbReference>
<dbReference type="NCBIfam" id="TIGR01337">
    <property type="entry name" value="apcB"/>
    <property type="match status" value="1"/>
</dbReference>
<dbReference type="PANTHER" id="PTHR34011:SF3">
    <property type="entry name" value="ALLOPHYCOCYANIN BETA CHAIN"/>
    <property type="match status" value="1"/>
</dbReference>
<dbReference type="PANTHER" id="PTHR34011">
    <property type="entry name" value="PHYCOBILISOME 32.1 KDA LINKER POLYPEPTIDE, PHYCOCYANIN-ASSOCIATED, ROD 2-RELATED"/>
    <property type="match status" value="1"/>
</dbReference>
<dbReference type="Pfam" id="PF00502">
    <property type="entry name" value="Phycobilisome"/>
    <property type="match status" value="1"/>
</dbReference>
<dbReference type="PIRSF" id="PIRSF000081">
    <property type="entry name" value="Phycocyanin"/>
    <property type="match status" value="1"/>
</dbReference>
<dbReference type="SUPFAM" id="SSF46458">
    <property type="entry name" value="Globin-like"/>
    <property type="match status" value="1"/>
</dbReference>
<sequence length="162" mass="17305">MAQDAITAVINSADVQGKYLDTAALEKLKAYFSTGELRVRAATTISANAAAIVKEAVAKSLLYSDITRPGGNMYTTRRYAACIRDLDYYLRYATYAMLAGDPSILDERVLNGLKETYNSLGVPVGATVQAIQAIKEVTASLVGADAGKEMGIYLDYISSGLS</sequence>
<keyword id="KW-0002">3D-structure</keyword>
<keyword id="KW-0042">Antenna complex</keyword>
<keyword id="KW-0089">Bile pigment</keyword>
<keyword id="KW-0157">Chromophore</keyword>
<keyword id="KW-0903">Direct protein sequencing</keyword>
<keyword id="KW-0249">Electron transport</keyword>
<keyword id="KW-0472">Membrane</keyword>
<keyword id="KW-0488">Methylation</keyword>
<keyword id="KW-0602">Photosynthesis</keyword>
<keyword id="KW-0605">Phycobilisome</keyword>
<keyword id="KW-1185">Reference proteome</keyword>
<keyword id="KW-0793">Thylakoid</keyword>
<keyword id="KW-0813">Transport</keyword>
<evidence type="ECO:0000250" key="1"/>
<evidence type="ECO:0000269" key="2">
    <source>
    </source>
</evidence>
<evidence type="ECO:0000305" key="3"/>
<protein>
    <recommendedName>
        <fullName>Allophycocyanin subunit beta</fullName>
    </recommendedName>
</protein>
<proteinExistence type="evidence at protein level"/>
<name>APCB_NOSS1</name>
<accession>P80557</accession>
<accession>O05713</accession>
<gene>
    <name type="primary">apcB</name>
    <name type="ordered locus">alr0022</name>
</gene>
<comment type="function">
    <text>Light-harvesting photosynthetic bile pigment-protein from the phycobiliprotein complex. Allophycocyanin has a maximum absorption at approximately 650 to 653 nanometers.</text>
</comment>
<comment type="subunit">
    <text>Heterohexamer of two alpha chains, one alpha-B chain and three beta chains.</text>
</comment>
<comment type="subcellular location">
    <subcellularLocation>
        <location>Cellular thylakoid membrane</location>
        <topology>Peripheral membrane protein</topology>
        <orientation>Cytoplasmic side</orientation>
    </subcellularLocation>
    <text>Forms the core of the phycobilisome.</text>
</comment>
<comment type="PTM">
    <text evidence="3">Contains one covalently linked phycocyanobilin chromophore (Probable). The chromophore is added by phycocyanobilin lyase CpcS 1.</text>
</comment>
<comment type="similarity">
    <text evidence="3">Belongs to the phycobiliprotein family.</text>
</comment>
<organism>
    <name type="scientific">Nostoc sp. (strain PCC 7120 / SAG 25.82 / UTEX 2576)</name>
    <dbReference type="NCBI Taxonomy" id="103690"/>
    <lineage>
        <taxon>Bacteria</taxon>
        <taxon>Bacillati</taxon>
        <taxon>Cyanobacteriota</taxon>
        <taxon>Cyanophyceae</taxon>
        <taxon>Nostocales</taxon>
        <taxon>Nostocaceae</taxon>
        <taxon>Nostoc</taxon>
    </lineage>
</organism>